<organism>
    <name type="scientific">Ureaplasma parvum serovar 3 (strain ATCC 700970)</name>
    <dbReference type="NCBI Taxonomy" id="273119"/>
    <lineage>
        <taxon>Bacteria</taxon>
        <taxon>Bacillati</taxon>
        <taxon>Mycoplasmatota</taxon>
        <taxon>Mycoplasmoidales</taxon>
        <taxon>Mycoplasmoidaceae</taxon>
        <taxon>Ureaplasma</taxon>
    </lineage>
</organism>
<dbReference type="EC" id="6.5.1.2" evidence="1"/>
<dbReference type="EMBL" id="AF222894">
    <property type="protein sequence ID" value="AAF30527.1"/>
    <property type="molecule type" value="Genomic_DNA"/>
</dbReference>
<dbReference type="RefSeq" id="WP_006689158.1">
    <property type="nucleotide sequence ID" value="NC_002162.1"/>
</dbReference>
<dbReference type="SMR" id="Q9PR23"/>
<dbReference type="STRING" id="273119.UU121"/>
<dbReference type="EnsemblBacteria" id="AAF30527">
    <property type="protein sequence ID" value="AAF30527"/>
    <property type="gene ID" value="UU121"/>
</dbReference>
<dbReference type="GeneID" id="29672169"/>
<dbReference type="KEGG" id="uur:UU121"/>
<dbReference type="eggNOG" id="COG0272">
    <property type="taxonomic scope" value="Bacteria"/>
</dbReference>
<dbReference type="HOGENOM" id="CLU_007764_2_1_14"/>
<dbReference type="OrthoDB" id="9759736at2"/>
<dbReference type="Proteomes" id="UP000000423">
    <property type="component" value="Chromosome"/>
</dbReference>
<dbReference type="GO" id="GO:0005829">
    <property type="term" value="C:cytosol"/>
    <property type="evidence" value="ECO:0007669"/>
    <property type="project" value="TreeGrafter"/>
</dbReference>
<dbReference type="GO" id="GO:0003911">
    <property type="term" value="F:DNA ligase (NAD+) activity"/>
    <property type="evidence" value="ECO:0007669"/>
    <property type="project" value="UniProtKB-UniRule"/>
</dbReference>
<dbReference type="GO" id="GO:0046872">
    <property type="term" value="F:metal ion binding"/>
    <property type="evidence" value="ECO:0007669"/>
    <property type="project" value="UniProtKB-KW"/>
</dbReference>
<dbReference type="GO" id="GO:0006281">
    <property type="term" value="P:DNA repair"/>
    <property type="evidence" value="ECO:0007669"/>
    <property type="project" value="UniProtKB-KW"/>
</dbReference>
<dbReference type="GO" id="GO:0006260">
    <property type="term" value="P:DNA replication"/>
    <property type="evidence" value="ECO:0007669"/>
    <property type="project" value="UniProtKB-KW"/>
</dbReference>
<dbReference type="CDD" id="cd17748">
    <property type="entry name" value="BRCT_DNA_ligase_like"/>
    <property type="match status" value="1"/>
</dbReference>
<dbReference type="CDD" id="cd00114">
    <property type="entry name" value="LIGANc"/>
    <property type="match status" value="1"/>
</dbReference>
<dbReference type="FunFam" id="1.10.287.610:FF:000002">
    <property type="entry name" value="DNA ligase"/>
    <property type="match status" value="1"/>
</dbReference>
<dbReference type="Gene3D" id="6.20.10.30">
    <property type="match status" value="1"/>
</dbReference>
<dbReference type="Gene3D" id="1.10.150.20">
    <property type="entry name" value="5' to 3' exonuclease, C-terminal subdomain"/>
    <property type="match status" value="2"/>
</dbReference>
<dbReference type="Gene3D" id="3.40.50.10190">
    <property type="entry name" value="BRCT domain"/>
    <property type="match status" value="1"/>
</dbReference>
<dbReference type="Gene3D" id="3.30.470.30">
    <property type="entry name" value="DNA ligase/mRNA capping enzyme"/>
    <property type="match status" value="1"/>
</dbReference>
<dbReference type="Gene3D" id="1.10.287.610">
    <property type="entry name" value="Helix hairpin bin"/>
    <property type="match status" value="1"/>
</dbReference>
<dbReference type="Gene3D" id="2.40.50.140">
    <property type="entry name" value="Nucleic acid-binding proteins"/>
    <property type="match status" value="1"/>
</dbReference>
<dbReference type="HAMAP" id="MF_01588">
    <property type="entry name" value="DNA_ligase_A"/>
    <property type="match status" value="1"/>
</dbReference>
<dbReference type="InterPro" id="IPR001357">
    <property type="entry name" value="BRCT_dom"/>
</dbReference>
<dbReference type="InterPro" id="IPR036420">
    <property type="entry name" value="BRCT_dom_sf"/>
</dbReference>
<dbReference type="InterPro" id="IPR041663">
    <property type="entry name" value="DisA/LigA_HHH"/>
</dbReference>
<dbReference type="InterPro" id="IPR001679">
    <property type="entry name" value="DNA_ligase"/>
</dbReference>
<dbReference type="InterPro" id="IPR013839">
    <property type="entry name" value="DNAligase_adenylation"/>
</dbReference>
<dbReference type="InterPro" id="IPR013840">
    <property type="entry name" value="DNAligase_N"/>
</dbReference>
<dbReference type="InterPro" id="IPR012340">
    <property type="entry name" value="NA-bd_OB-fold"/>
</dbReference>
<dbReference type="InterPro" id="IPR004150">
    <property type="entry name" value="NAD_DNA_ligase_OB"/>
</dbReference>
<dbReference type="InterPro" id="IPR010994">
    <property type="entry name" value="RuvA_2-like"/>
</dbReference>
<dbReference type="InterPro" id="IPR004149">
    <property type="entry name" value="Znf_DNAligase_C4"/>
</dbReference>
<dbReference type="NCBIfam" id="TIGR00575">
    <property type="entry name" value="dnlj"/>
    <property type="match status" value="1"/>
</dbReference>
<dbReference type="NCBIfam" id="NF005932">
    <property type="entry name" value="PRK07956.1"/>
    <property type="match status" value="1"/>
</dbReference>
<dbReference type="PANTHER" id="PTHR23389">
    <property type="entry name" value="CHROMOSOME TRANSMISSION FIDELITY FACTOR 18"/>
    <property type="match status" value="1"/>
</dbReference>
<dbReference type="PANTHER" id="PTHR23389:SF9">
    <property type="entry name" value="DNA LIGASE"/>
    <property type="match status" value="1"/>
</dbReference>
<dbReference type="Pfam" id="PF00533">
    <property type="entry name" value="BRCT"/>
    <property type="match status" value="1"/>
</dbReference>
<dbReference type="Pfam" id="PF01653">
    <property type="entry name" value="DNA_ligase_aden"/>
    <property type="match status" value="1"/>
</dbReference>
<dbReference type="Pfam" id="PF03120">
    <property type="entry name" value="DNA_ligase_OB"/>
    <property type="match status" value="1"/>
</dbReference>
<dbReference type="Pfam" id="PF03119">
    <property type="entry name" value="DNA_ligase_ZBD"/>
    <property type="match status" value="1"/>
</dbReference>
<dbReference type="Pfam" id="PF12826">
    <property type="entry name" value="HHH_2"/>
    <property type="match status" value="1"/>
</dbReference>
<dbReference type="PIRSF" id="PIRSF001604">
    <property type="entry name" value="LigA"/>
    <property type="match status" value="1"/>
</dbReference>
<dbReference type="SMART" id="SM00532">
    <property type="entry name" value="LIGANc"/>
    <property type="match status" value="1"/>
</dbReference>
<dbReference type="SUPFAM" id="SSF52113">
    <property type="entry name" value="BRCT domain"/>
    <property type="match status" value="1"/>
</dbReference>
<dbReference type="SUPFAM" id="SSF56091">
    <property type="entry name" value="DNA ligase/mRNA capping enzyme, catalytic domain"/>
    <property type="match status" value="1"/>
</dbReference>
<dbReference type="SUPFAM" id="SSF50249">
    <property type="entry name" value="Nucleic acid-binding proteins"/>
    <property type="match status" value="1"/>
</dbReference>
<dbReference type="SUPFAM" id="SSF47781">
    <property type="entry name" value="RuvA domain 2-like"/>
    <property type="match status" value="1"/>
</dbReference>
<proteinExistence type="inferred from homology"/>
<protein>
    <recommendedName>
        <fullName evidence="1">DNA ligase</fullName>
        <ecNumber evidence="1">6.5.1.2</ecNumber>
    </recommendedName>
    <alternativeName>
        <fullName evidence="1">Polydeoxyribonucleotide synthase [NAD(+)]</fullName>
    </alternativeName>
</protein>
<name>DNLJ_UREPA</name>
<evidence type="ECO:0000255" key="1">
    <source>
        <dbReference type="HAMAP-Rule" id="MF_01588"/>
    </source>
</evidence>
<comment type="function">
    <text evidence="1">DNA ligase that catalyzes the formation of phosphodiester linkages between 5'-phosphoryl and 3'-hydroxyl groups in double-stranded DNA using NAD as a coenzyme and as the energy source for the reaction. It is essential for DNA replication and repair of damaged DNA.</text>
</comment>
<comment type="catalytic activity">
    <reaction evidence="1">
        <text>NAD(+) + (deoxyribonucleotide)n-3'-hydroxyl + 5'-phospho-(deoxyribonucleotide)m = (deoxyribonucleotide)n+m + AMP + beta-nicotinamide D-nucleotide.</text>
        <dbReference type="EC" id="6.5.1.2"/>
    </reaction>
</comment>
<comment type="cofactor">
    <cofactor evidence="1">
        <name>Mg(2+)</name>
        <dbReference type="ChEBI" id="CHEBI:18420"/>
    </cofactor>
    <cofactor evidence="1">
        <name>Mn(2+)</name>
        <dbReference type="ChEBI" id="CHEBI:29035"/>
    </cofactor>
</comment>
<comment type="similarity">
    <text evidence="1">Belongs to the NAD-dependent DNA ligase family. LigA subfamily.</text>
</comment>
<keyword id="KW-0227">DNA damage</keyword>
<keyword id="KW-0234">DNA repair</keyword>
<keyword id="KW-0235">DNA replication</keyword>
<keyword id="KW-0436">Ligase</keyword>
<keyword id="KW-0460">Magnesium</keyword>
<keyword id="KW-0464">Manganese</keyword>
<keyword id="KW-0479">Metal-binding</keyword>
<keyword id="KW-0520">NAD</keyword>
<keyword id="KW-1185">Reference proteome</keyword>
<keyword id="KW-0862">Zinc</keyword>
<sequence length="673" mass="77451">MDKIKAKIDELKQKLDQWNYEYYVLDDPSVPDHVYDQTMRELIELENNYPQFKTNNSPSVKVGGFVSEKFNKVKHKRPMLSLSNAFNDDDLKKFDQDNQNASVDLKGYVVEPKIDGLSISIIYKNAKLHQAITRGDGINGEDVTSNILTIKDIPHYIDQKYKDYEIEVRGEVYMAFHDFYEMNDNLEESDKKFANPRNAAAGTLRSLDNSIVAERKLSAFMYYLVNAQELGIKTHYESIQFLRDNKFKVSDLIVKVDTINEVINQIDCYTKVRDKLSYMIDGIVIKINNLEVYDEIGYTSKFPKWAIAYKFPANVVSSQLLEIINDVGRTGKISYVAKIKPILLDGSMVEYATLHNFDFIKEKDIRINDEIKIYKAGDVIPYVDGVDLSKRLANSVPYEPIINCPSCQSVLVRENDEVDQRCLNIYGCKKINIEKIVYFVSRNCMNIEGMSDAIINKFYDANLIKNIADLYYLQKHKEFILTSDFKIKEKSFSNLINSINNSKKCSLEFLLTAFGIRHVGPNLAKKIAKQFKTMTALMHANFDELTNVDACGEKAALSLINWFNDEHNVSLVNQLQQVGVNMEYIDDFIYDDNINIIDEYKNKTFVITGSFSISRDEIKTILEKYYHAKVKNSVSKKTDYVLVGTEAGTKLEKAKLLGVKIIENEFWKKDNNF</sequence>
<feature type="chain" id="PRO_0000313501" description="DNA ligase">
    <location>
        <begin position="1"/>
        <end position="673"/>
    </location>
</feature>
<feature type="domain" description="BRCT" evidence="1">
    <location>
        <begin position="595"/>
        <end position="673"/>
    </location>
</feature>
<feature type="active site" description="N6-AMP-lysine intermediate" evidence="1">
    <location>
        <position position="113"/>
    </location>
</feature>
<feature type="binding site" evidence="1">
    <location>
        <begin position="32"/>
        <end position="36"/>
    </location>
    <ligand>
        <name>NAD(+)</name>
        <dbReference type="ChEBI" id="CHEBI:57540"/>
    </ligand>
</feature>
<feature type="binding site" evidence="1">
    <location>
        <begin position="81"/>
        <end position="82"/>
    </location>
    <ligand>
        <name>NAD(+)</name>
        <dbReference type="ChEBI" id="CHEBI:57540"/>
    </ligand>
</feature>
<feature type="binding site" evidence="1">
    <location>
        <position position="111"/>
    </location>
    <ligand>
        <name>NAD(+)</name>
        <dbReference type="ChEBI" id="CHEBI:57540"/>
    </ligand>
</feature>
<feature type="binding site" evidence="1">
    <location>
        <position position="134"/>
    </location>
    <ligand>
        <name>NAD(+)</name>
        <dbReference type="ChEBI" id="CHEBI:57540"/>
    </ligand>
</feature>
<feature type="binding site" evidence="1">
    <location>
        <position position="171"/>
    </location>
    <ligand>
        <name>NAD(+)</name>
        <dbReference type="ChEBI" id="CHEBI:57540"/>
    </ligand>
</feature>
<feature type="binding site" evidence="1">
    <location>
        <position position="286"/>
    </location>
    <ligand>
        <name>NAD(+)</name>
        <dbReference type="ChEBI" id="CHEBI:57540"/>
    </ligand>
</feature>
<feature type="binding site" evidence="1">
    <location>
        <position position="310"/>
    </location>
    <ligand>
        <name>NAD(+)</name>
        <dbReference type="ChEBI" id="CHEBI:57540"/>
    </ligand>
</feature>
<feature type="binding site" evidence="1">
    <location>
        <position position="404"/>
    </location>
    <ligand>
        <name>Zn(2+)</name>
        <dbReference type="ChEBI" id="CHEBI:29105"/>
    </ligand>
</feature>
<feature type="binding site" evidence="1">
    <location>
        <position position="407"/>
    </location>
    <ligand>
        <name>Zn(2+)</name>
        <dbReference type="ChEBI" id="CHEBI:29105"/>
    </ligand>
</feature>
<feature type="binding site" evidence="1">
    <location>
        <position position="422"/>
    </location>
    <ligand>
        <name>Zn(2+)</name>
        <dbReference type="ChEBI" id="CHEBI:29105"/>
    </ligand>
</feature>
<feature type="binding site" evidence="1">
    <location>
        <position position="428"/>
    </location>
    <ligand>
        <name>Zn(2+)</name>
        <dbReference type="ChEBI" id="CHEBI:29105"/>
    </ligand>
</feature>
<reference key="1">
    <citation type="journal article" date="2000" name="Nature">
        <title>The complete sequence of the mucosal pathogen Ureaplasma urealyticum.</title>
        <authorList>
            <person name="Glass J.I."/>
            <person name="Lefkowitz E.J."/>
            <person name="Glass J.S."/>
            <person name="Heiner C.R."/>
            <person name="Chen E.Y."/>
            <person name="Cassell G.H."/>
        </authorList>
    </citation>
    <scope>NUCLEOTIDE SEQUENCE [LARGE SCALE GENOMIC DNA]</scope>
    <source>
        <strain>ATCC 700970</strain>
    </source>
</reference>
<accession>Q9PR23</accession>
<gene>
    <name evidence="1" type="primary">ligA</name>
    <name type="ordered locus">UU121</name>
</gene>